<evidence type="ECO:0000255" key="1">
    <source>
        <dbReference type="HAMAP-Rule" id="MF_00034"/>
    </source>
</evidence>
<dbReference type="EC" id="3.1.21.10" evidence="1"/>
<dbReference type="EMBL" id="CP000075">
    <property type="protein sequence ID" value="AAY36459.1"/>
    <property type="molecule type" value="Genomic_DNA"/>
</dbReference>
<dbReference type="RefSeq" id="WP_011266999.1">
    <property type="nucleotide sequence ID" value="NC_007005.1"/>
</dbReference>
<dbReference type="RefSeq" id="YP_234497.1">
    <property type="nucleotide sequence ID" value="NC_007005.1"/>
</dbReference>
<dbReference type="SMR" id="Q4ZWL3"/>
<dbReference type="STRING" id="205918.Psyr_1408"/>
<dbReference type="KEGG" id="psb:Psyr_1408"/>
<dbReference type="PATRIC" id="fig|205918.7.peg.1444"/>
<dbReference type="eggNOG" id="COG0817">
    <property type="taxonomic scope" value="Bacteria"/>
</dbReference>
<dbReference type="HOGENOM" id="CLU_091257_2_1_6"/>
<dbReference type="OrthoDB" id="9805499at2"/>
<dbReference type="Proteomes" id="UP000000426">
    <property type="component" value="Chromosome"/>
</dbReference>
<dbReference type="GO" id="GO:0005737">
    <property type="term" value="C:cytoplasm"/>
    <property type="evidence" value="ECO:0007669"/>
    <property type="project" value="UniProtKB-SubCell"/>
</dbReference>
<dbReference type="GO" id="GO:0048476">
    <property type="term" value="C:Holliday junction resolvase complex"/>
    <property type="evidence" value="ECO:0007669"/>
    <property type="project" value="UniProtKB-UniRule"/>
</dbReference>
<dbReference type="GO" id="GO:0008821">
    <property type="term" value="F:crossover junction DNA endonuclease activity"/>
    <property type="evidence" value="ECO:0007669"/>
    <property type="project" value="UniProtKB-UniRule"/>
</dbReference>
<dbReference type="GO" id="GO:0003677">
    <property type="term" value="F:DNA binding"/>
    <property type="evidence" value="ECO:0007669"/>
    <property type="project" value="UniProtKB-KW"/>
</dbReference>
<dbReference type="GO" id="GO:0000287">
    <property type="term" value="F:magnesium ion binding"/>
    <property type="evidence" value="ECO:0007669"/>
    <property type="project" value="UniProtKB-UniRule"/>
</dbReference>
<dbReference type="GO" id="GO:0006310">
    <property type="term" value="P:DNA recombination"/>
    <property type="evidence" value="ECO:0007669"/>
    <property type="project" value="UniProtKB-UniRule"/>
</dbReference>
<dbReference type="GO" id="GO:0006281">
    <property type="term" value="P:DNA repair"/>
    <property type="evidence" value="ECO:0007669"/>
    <property type="project" value="UniProtKB-UniRule"/>
</dbReference>
<dbReference type="CDD" id="cd16962">
    <property type="entry name" value="RuvC"/>
    <property type="match status" value="1"/>
</dbReference>
<dbReference type="FunFam" id="3.30.420.10:FF:000002">
    <property type="entry name" value="Crossover junction endodeoxyribonuclease RuvC"/>
    <property type="match status" value="1"/>
</dbReference>
<dbReference type="Gene3D" id="3.30.420.10">
    <property type="entry name" value="Ribonuclease H-like superfamily/Ribonuclease H"/>
    <property type="match status" value="1"/>
</dbReference>
<dbReference type="HAMAP" id="MF_00034">
    <property type="entry name" value="RuvC"/>
    <property type="match status" value="1"/>
</dbReference>
<dbReference type="InterPro" id="IPR012337">
    <property type="entry name" value="RNaseH-like_sf"/>
</dbReference>
<dbReference type="InterPro" id="IPR036397">
    <property type="entry name" value="RNaseH_sf"/>
</dbReference>
<dbReference type="InterPro" id="IPR020563">
    <property type="entry name" value="X-over_junc_endoDNase_Mg_BS"/>
</dbReference>
<dbReference type="InterPro" id="IPR002176">
    <property type="entry name" value="X-over_junc_endoDNase_RuvC"/>
</dbReference>
<dbReference type="NCBIfam" id="TIGR00228">
    <property type="entry name" value="ruvC"/>
    <property type="match status" value="1"/>
</dbReference>
<dbReference type="PANTHER" id="PTHR30194">
    <property type="entry name" value="CROSSOVER JUNCTION ENDODEOXYRIBONUCLEASE RUVC"/>
    <property type="match status" value="1"/>
</dbReference>
<dbReference type="PANTHER" id="PTHR30194:SF3">
    <property type="entry name" value="CROSSOVER JUNCTION ENDODEOXYRIBONUCLEASE RUVC"/>
    <property type="match status" value="1"/>
</dbReference>
<dbReference type="Pfam" id="PF02075">
    <property type="entry name" value="RuvC"/>
    <property type="match status" value="1"/>
</dbReference>
<dbReference type="PRINTS" id="PR00696">
    <property type="entry name" value="RSOLVASERUVC"/>
</dbReference>
<dbReference type="SUPFAM" id="SSF53098">
    <property type="entry name" value="Ribonuclease H-like"/>
    <property type="match status" value="1"/>
</dbReference>
<dbReference type="PROSITE" id="PS01321">
    <property type="entry name" value="RUVC"/>
    <property type="match status" value="1"/>
</dbReference>
<name>RUVC_PSEU2</name>
<comment type="function">
    <text evidence="1">The RuvA-RuvB-RuvC complex processes Holliday junction (HJ) DNA during genetic recombination and DNA repair. Endonuclease that resolves HJ intermediates. Cleaves cruciform DNA by making single-stranded nicks across the HJ at symmetrical positions within the homologous arms, yielding a 5'-phosphate and a 3'-hydroxyl group; requires a central core of homology in the junction. The consensus cleavage sequence is 5'-(A/T)TT(C/G)-3'. Cleavage occurs on the 3'-side of the TT dinucleotide at the point of strand exchange. HJ branch migration catalyzed by RuvA-RuvB allows RuvC to scan DNA until it finds its consensus sequence, where it cleaves and resolves the cruciform DNA.</text>
</comment>
<comment type="catalytic activity">
    <reaction evidence="1">
        <text>Endonucleolytic cleavage at a junction such as a reciprocal single-stranded crossover between two homologous DNA duplexes (Holliday junction).</text>
        <dbReference type="EC" id="3.1.21.10"/>
    </reaction>
</comment>
<comment type="cofactor">
    <cofactor evidence="1">
        <name>Mg(2+)</name>
        <dbReference type="ChEBI" id="CHEBI:18420"/>
    </cofactor>
    <text evidence="1">Binds 2 Mg(2+) ion per subunit.</text>
</comment>
<comment type="subunit">
    <text evidence="1">Homodimer which binds Holliday junction (HJ) DNA. The HJ becomes 2-fold symmetrical on binding to RuvC with unstacked arms; it has a different conformation from HJ DNA in complex with RuvA. In the full resolvosome a probable DNA-RuvA(4)-RuvB(12)-RuvC(2) complex forms which resolves the HJ.</text>
</comment>
<comment type="subcellular location">
    <subcellularLocation>
        <location evidence="1">Cytoplasm</location>
    </subcellularLocation>
</comment>
<comment type="similarity">
    <text evidence="1">Belongs to the RuvC family.</text>
</comment>
<proteinExistence type="inferred from homology"/>
<keyword id="KW-0963">Cytoplasm</keyword>
<keyword id="KW-0227">DNA damage</keyword>
<keyword id="KW-0233">DNA recombination</keyword>
<keyword id="KW-0234">DNA repair</keyword>
<keyword id="KW-0238">DNA-binding</keyword>
<keyword id="KW-0255">Endonuclease</keyword>
<keyword id="KW-0378">Hydrolase</keyword>
<keyword id="KW-0460">Magnesium</keyword>
<keyword id="KW-0479">Metal-binding</keyword>
<keyword id="KW-0540">Nuclease</keyword>
<sequence>MTLILGIDPGSRITGYGVVRDTGRGCVYVASGCIRTGSGELHERLQIVYRGVREVIKTYEPVTMGIEKVFMARNADSALKLGQARGAAIVAGAEEALEIAEYTATQVKQAVAGTGGANKEQVMMMVMHLLKLTQKPQIDASDALAIALCHAHTRSSLIPHGLGTARSRGGRLRL</sequence>
<reference key="1">
    <citation type="journal article" date="2005" name="Proc. Natl. Acad. Sci. U.S.A.">
        <title>Comparison of the complete genome sequences of Pseudomonas syringae pv. syringae B728a and pv. tomato DC3000.</title>
        <authorList>
            <person name="Feil H."/>
            <person name="Feil W.S."/>
            <person name="Chain P."/>
            <person name="Larimer F."/>
            <person name="Dibartolo G."/>
            <person name="Copeland A."/>
            <person name="Lykidis A."/>
            <person name="Trong S."/>
            <person name="Nolan M."/>
            <person name="Goltsman E."/>
            <person name="Thiel J."/>
            <person name="Malfatti S."/>
            <person name="Loper J.E."/>
            <person name="Lapidus A."/>
            <person name="Detter J.C."/>
            <person name="Land M."/>
            <person name="Richardson P.M."/>
            <person name="Kyrpides N.C."/>
            <person name="Ivanova N."/>
            <person name="Lindow S.E."/>
        </authorList>
    </citation>
    <scope>NUCLEOTIDE SEQUENCE [LARGE SCALE GENOMIC DNA]</scope>
    <source>
        <strain>B728a</strain>
    </source>
</reference>
<protein>
    <recommendedName>
        <fullName evidence="1">Crossover junction endodeoxyribonuclease RuvC</fullName>
        <ecNumber evidence="1">3.1.21.10</ecNumber>
    </recommendedName>
    <alternativeName>
        <fullName evidence="1">Holliday junction nuclease RuvC</fullName>
    </alternativeName>
    <alternativeName>
        <fullName evidence="1">Holliday junction resolvase RuvC</fullName>
    </alternativeName>
</protein>
<accession>Q4ZWL3</accession>
<organism>
    <name type="scientific">Pseudomonas syringae pv. syringae (strain B728a)</name>
    <dbReference type="NCBI Taxonomy" id="205918"/>
    <lineage>
        <taxon>Bacteria</taxon>
        <taxon>Pseudomonadati</taxon>
        <taxon>Pseudomonadota</taxon>
        <taxon>Gammaproteobacteria</taxon>
        <taxon>Pseudomonadales</taxon>
        <taxon>Pseudomonadaceae</taxon>
        <taxon>Pseudomonas</taxon>
        <taxon>Pseudomonas syringae</taxon>
    </lineage>
</organism>
<gene>
    <name evidence="1" type="primary">ruvC</name>
    <name type="ordered locus">Psyr_1408</name>
</gene>
<feature type="chain" id="PRO_0000225167" description="Crossover junction endodeoxyribonuclease RuvC">
    <location>
        <begin position="1"/>
        <end position="174"/>
    </location>
</feature>
<feature type="active site" evidence="1">
    <location>
        <position position="8"/>
    </location>
</feature>
<feature type="active site" evidence="1">
    <location>
        <position position="67"/>
    </location>
</feature>
<feature type="active site" evidence="1">
    <location>
        <position position="139"/>
    </location>
</feature>
<feature type="binding site" evidence="1">
    <location>
        <position position="8"/>
    </location>
    <ligand>
        <name>Mg(2+)</name>
        <dbReference type="ChEBI" id="CHEBI:18420"/>
        <label>1</label>
    </ligand>
</feature>
<feature type="binding site" evidence="1">
    <location>
        <position position="67"/>
    </location>
    <ligand>
        <name>Mg(2+)</name>
        <dbReference type="ChEBI" id="CHEBI:18420"/>
        <label>2</label>
    </ligand>
</feature>
<feature type="binding site" evidence="1">
    <location>
        <position position="139"/>
    </location>
    <ligand>
        <name>Mg(2+)</name>
        <dbReference type="ChEBI" id="CHEBI:18420"/>
        <label>1</label>
    </ligand>
</feature>